<protein>
    <recommendedName>
        <fullName evidence="1">DNA replication and repair protein RecF</fullName>
    </recommendedName>
</protein>
<proteinExistence type="inferred from homology"/>
<comment type="function">
    <text evidence="1">The RecF protein is involved in DNA metabolism; it is required for DNA replication and normal SOS inducibility. RecF binds preferentially to single-stranded, linear DNA. It also seems to bind ATP.</text>
</comment>
<comment type="subcellular location">
    <subcellularLocation>
        <location evidence="1">Cytoplasm</location>
    </subcellularLocation>
</comment>
<comment type="similarity">
    <text evidence="1">Belongs to the RecF family.</text>
</comment>
<evidence type="ECO:0000255" key="1">
    <source>
        <dbReference type="HAMAP-Rule" id="MF_00365"/>
    </source>
</evidence>
<sequence length="360" mass="41512">MKNIFLHSLSLENYRNFKNLELKTDNTPIILIGENGSGKTNILEAISLFYPGRGLRSAKLANVCKTSEDHCLVKALLQSKLGLAEFTTQFKRSSNRRITEYNESKIANNELSKFTSMVWLTPHMEGIFTSGSNDRRKFLDRIVYNFDPKHAELVSKYEYYMHERNKILVEDIRDDNWLKIIEEKMADISNHIANNRLKTLEFMQQAIDDLENEFPKADLSIDGIVEQKILNGKENIVSFITAELYQTRSKDKLLGRTSFGVHKSDFLVKHQKKNILAKFCSTGEQKAILIAIILAEMNYAIKLTKIAPILLLDEVFVHLDDKRRQYLIEFLTGLNMQLWVTTTNLEGIENFANKAQLIKL</sequence>
<organism>
    <name type="scientific">Rickettsia rickettsii (strain Sheila Smith)</name>
    <dbReference type="NCBI Taxonomy" id="392021"/>
    <lineage>
        <taxon>Bacteria</taxon>
        <taxon>Pseudomonadati</taxon>
        <taxon>Pseudomonadota</taxon>
        <taxon>Alphaproteobacteria</taxon>
        <taxon>Rickettsiales</taxon>
        <taxon>Rickettsiaceae</taxon>
        <taxon>Rickettsieae</taxon>
        <taxon>Rickettsia</taxon>
        <taxon>spotted fever group</taxon>
    </lineage>
</organism>
<accession>A8GQG2</accession>
<reference key="1">
    <citation type="submission" date="2007-09" db="EMBL/GenBank/DDBJ databases">
        <title>Complete genome sequence of Rickettsia rickettsii.</title>
        <authorList>
            <person name="Madan A."/>
            <person name="Fahey J."/>
            <person name="Helton E."/>
            <person name="Ketteman M."/>
            <person name="Madan A."/>
            <person name="Rodrigues S."/>
            <person name="Sanchez A."/>
            <person name="Dasch G."/>
            <person name="Eremeeva M."/>
        </authorList>
    </citation>
    <scope>NUCLEOTIDE SEQUENCE [LARGE SCALE GENOMIC DNA]</scope>
    <source>
        <strain>Sheila Smith</strain>
    </source>
</reference>
<feature type="chain" id="PRO_1000048566" description="DNA replication and repair protein RecF">
    <location>
        <begin position="1"/>
        <end position="360"/>
    </location>
</feature>
<feature type="binding site" evidence="1">
    <location>
        <begin position="33"/>
        <end position="40"/>
    </location>
    <ligand>
        <name>ATP</name>
        <dbReference type="ChEBI" id="CHEBI:30616"/>
    </ligand>
</feature>
<dbReference type="EMBL" id="CP000848">
    <property type="protein sequence ID" value="ABV75637.1"/>
    <property type="molecule type" value="Genomic_DNA"/>
</dbReference>
<dbReference type="RefSeq" id="WP_012150261.1">
    <property type="nucleotide sequence ID" value="NZ_CP121767.1"/>
</dbReference>
<dbReference type="SMR" id="A8GQG2"/>
<dbReference type="GeneID" id="79936845"/>
<dbReference type="KEGG" id="rri:A1G_00205"/>
<dbReference type="HOGENOM" id="CLU_040267_2_0_5"/>
<dbReference type="Proteomes" id="UP000006832">
    <property type="component" value="Chromosome"/>
</dbReference>
<dbReference type="GO" id="GO:0005737">
    <property type="term" value="C:cytoplasm"/>
    <property type="evidence" value="ECO:0007669"/>
    <property type="project" value="UniProtKB-SubCell"/>
</dbReference>
<dbReference type="GO" id="GO:0005524">
    <property type="term" value="F:ATP binding"/>
    <property type="evidence" value="ECO:0007669"/>
    <property type="project" value="UniProtKB-UniRule"/>
</dbReference>
<dbReference type="GO" id="GO:0003697">
    <property type="term" value="F:single-stranded DNA binding"/>
    <property type="evidence" value="ECO:0007669"/>
    <property type="project" value="UniProtKB-UniRule"/>
</dbReference>
<dbReference type="GO" id="GO:0006260">
    <property type="term" value="P:DNA replication"/>
    <property type="evidence" value="ECO:0007669"/>
    <property type="project" value="UniProtKB-UniRule"/>
</dbReference>
<dbReference type="GO" id="GO:0000731">
    <property type="term" value="P:DNA synthesis involved in DNA repair"/>
    <property type="evidence" value="ECO:0007669"/>
    <property type="project" value="TreeGrafter"/>
</dbReference>
<dbReference type="GO" id="GO:0006302">
    <property type="term" value="P:double-strand break repair"/>
    <property type="evidence" value="ECO:0007669"/>
    <property type="project" value="TreeGrafter"/>
</dbReference>
<dbReference type="GO" id="GO:0009432">
    <property type="term" value="P:SOS response"/>
    <property type="evidence" value="ECO:0007669"/>
    <property type="project" value="UniProtKB-UniRule"/>
</dbReference>
<dbReference type="Gene3D" id="3.40.50.300">
    <property type="entry name" value="P-loop containing nucleotide triphosphate hydrolases"/>
    <property type="match status" value="1"/>
</dbReference>
<dbReference type="Gene3D" id="1.20.1050.90">
    <property type="entry name" value="RecF/RecN/SMC, N-terminal domain"/>
    <property type="match status" value="1"/>
</dbReference>
<dbReference type="HAMAP" id="MF_00365">
    <property type="entry name" value="RecF"/>
    <property type="match status" value="1"/>
</dbReference>
<dbReference type="InterPro" id="IPR001238">
    <property type="entry name" value="DNA-binding_RecF"/>
</dbReference>
<dbReference type="InterPro" id="IPR018078">
    <property type="entry name" value="DNA-binding_RecF_CS"/>
</dbReference>
<dbReference type="InterPro" id="IPR027417">
    <property type="entry name" value="P-loop_NTPase"/>
</dbReference>
<dbReference type="InterPro" id="IPR003395">
    <property type="entry name" value="RecF/RecN/SMC_N"/>
</dbReference>
<dbReference type="InterPro" id="IPR042174">
    <property type="entry name" value="RecF_2"/>
</dbReference>
<dbReference type="NCBIfam" id="TIGR00611">
    <property type="entry name" value="recf"/>
    <property type="match status" value="1"/>
</dbReference>
<dbReference type="PANTHER" id="PTHR32182">
    <property type="entry name" value="DNA REPLICATION AND REPAIR PROTEIN RECF"/>
    <property type="match status" value="1"/>
</dbReference>
<dbReference type="PANTHER" id="PTHR32182:SF0">
    <property type="entry name" value="DNA REPLICATION AND REPAIR PROTEIN RECF"/>
    <property type="match status" value="1"/>
</dbReference>
<dbReference type="Pfam" id="PF02463">
    <property type="entry name" value="SMC_N"/>
    <property type="match status" value="1"/>
</dbReference>
<dbReference type="SUPFAM" id="SSF52540">
    <property type="entry name" value="P-loop containing nucleoside triphosphate hydrolases"/>
    <property type="match status" value="1"/>
</dbReference>
<dbReference type="PROSITE" id="PS00617">
    <property type="entry name" value="RECF_1"/>
    <property type="match status" value="1"/>
</dbReference>
<dbReference type="PROSITE" id="PS00618">
    <property type="entry name" value="RECF_2"/>
    <property type="match status" value="1"/>
</dbReference>
<keyword id="KW-0067">ATP-binding</keyword>
<keyword id="KW-0963">Cytoplasm</keyword>
<keyword id="KW-0227">DNA damage</keyword>
<keyword id="KW-0234">DNA repair</keyword>
<keyword id="KW-0235">DNA replication</keyword>
<keyword id="KW-0238">DNA-binding</keyword>
<keyword id="KW-0547">Nucleotide-binding</keyword>
<keyword id="KW-0742">SOS response</keyword>
<gene>
    <name evidence="1" type="primary">recF</name>
    <name type="ordered locus">A1G_00205</name>
</gene>
<name>RECF_RICRS</name>